<protein>
    <recommendedName>
        <fullName evidence="6">Dermonecrotic toxin LruSicTox-alphaIC1b</fullName>
        <ecNumber evidence="4">4.6.1.-</ecNumber>
    </recommendedName>
    <alternativeName>
        <fullName>Phospholipase D</fullName>
        <shortName>PLD</shortName>
    </alternativeName>
    <alternativeName>
        <fullName>Sphingomyelin phosphodiesterase D</fullName>
        <shortName>SMD</shortName>
        <shortName>SMase D</shortName>
        <shortName>Sphingomyelinase D</shortName>
    </alternativeName>
</protein>
<dbReference type="EC" id="4.6.1.-" evidence="4"/>
<dbReference type="EMBL" id="FJ171435">
    <property type="protein sequence ID" value="ACN48931.1"/>
    <property type="molecule type" value="mRNA"/>
</dbReference>
<dbReference type="SMR" id="C0JB00"/>
<dbReference type="GO" id="GO:0005576">
    <property type="term" value="C:extracellular region"/>
    <property type="evidence" value="ECO:0007669"/>
    <property type="project" value="UniProtKB-SubCell"/>
</dbReference>
<dbReference type="GO" id="GO:0016829">
    <property type="term" value="F:lyase activity"/>
    <property type="evidence" value="ECO:0007669"/>
    <property type="project" value="UniProtKB-KW"/>
</dbReference>
<dbReference type="GO" id="GO:0046872">
    <property type="term" value="F:metal ion binding"/>
    <property type="evidence" value="ECO:0007669"/>
    <property type="project" value="UniProtKB-KW"/>
</dbReference>
<dbReference type="GO" id="GO:0008081">
    <property type="term" value="F:phosphoric diester hydrolase activity"/>
    <property type="evidence" value="ECO:0007669"/>
    <property type="project" value="InterPro"/>
</dbReference>
<dbReference type="GO" id="GO:0090729">
    <property type="term" value="F:toxin activity"/>
    <property type="evidence" value="ECO:0007669"/>
    <property type="project" value="UniProtKB-KW"/>
</dbReference>
<dbReference type="GO" id="GO:0031640">
    <property type="term" value="P:killing of cells of another organism"/>
    <property type="evidence" value="ECO:0007669"/>
    <property type="project" value="UniProtKB-KW"/>
</dbReference>
<dbReference type="GO" id="GO:0016042">
    <property type="term" value="P:lipid catabolic process"/>
    <property type="evidence" value="ECO:0007669"/>
    <property type="project" value="UniProtKB-KW"/>
</dbReference>
<dbReference type="CDD" id="cd08576">
    <property type="entry name" value="GDPD_like_SMaseD_PLD"/>
    <property type="match status" value="1"/>
</dbReference>
<dbReference type="Gene3D" id="3.20.20.190">
    <property type="entry name" value="Phosphatidylinositol (PI) phosphodiesterase"/>
    <property type="match status" value="1"/>
</dbReference>
<dbReference type="InterPro" id="IPR017946">
    <property type="entry name" value="PLC-like_Pdiesterase_TIM-brl"/>
</dbReference>
<dbReference type="Pfam" id="PF13653">
    <property type="entry name" value="GDPD_2"/>
    <property type="match status" value="1"/>
</dbReference>
<dbReference type="SUPFAM" id="SSF51695">
    <property type="entry name" value="PLC-like phosphodiesterases"/>
    <property type="match status" value="1"/>
</dbReference>
<accession>C0JB00</accession>
<name>A1OB_LOXRU</name>
<reference key="1">
    <citation type="journal article" date="2009" name="Mol. Biol. Evol.">
        <title>Molecular evolution, functional variation, and proposed nomenclature of the gene family that includes sphingomyelinase D in sicariid spider venoms.</title>
        <authorList>
            <person name="Binford G.J."/>
            <person name="Bodner M.R."/>
            <person name="Cordes M.H."/>
            <person name="Baldwin K.L."/>
            <person name="Rynerson M.R."/>
            <person name="Burns S.N."/>
            <person name="Zobel-Thropp P.A."/>
        </authorList>
    </citation>
    <scope>NUCLEOTIDE SEQUENCE [MRNA]</scope>
    <scope>NOMENCLATURE</scope>
    <source>
        <tissue>Venom gland</tissue>
    </source>
</reference>
<keyword id="KW-0204">Cytolysis</keyword>
<keyword id="KW-1061">Dermonecrotic toxin</keyword>
<keyword id="KW-1015">Disulfide bond</keyword>
<keyword id="KW-0354">Hemolysis</keyword>
<keyword id="KW-0442">Lipid degradation</keyword>
<keyword id="KW-0443">Lipid metabolism</keyword>
<keyword id="KW-0456">Lyase</keyword>
<keyword id="KW-0460">Magnesium</keyword>
<keyword id="KW-0479">Metal-binding</keyword>
<keyword id="KW-0964">Secreted</keyword>
<keyword id="KW-0800">Toxin</keyword>
<comment type="function">
    <text evidence="1 3">Dermonecrotic toxins cleave the phosphodiester linkage between the phosphate and headgroup of certain phospholipids (sphingolipid and lysolipid substrates), forming an alcohol (often choline) and a cyclic phosphate (By similarity). This toxin acts on sphingomyelin (SM) (By similarity). It may also act on ceramide phosphoethanolamine (CPE), lysophosphatidylcholine (LPC) and lysophosphatidylethanolamine (LPE), but not on lysophosphatidylserine (LPS), and lysophosphatidylglycerol (LPG) (By similarity). It acts by transphosphatidylation, releasing exclusively cyclic phosphate products as second products (By similarity). Induces dermonecrosis, hemolysis, increased vascular permeability, edema, inflammatory response, and platelet aggregation (By similarity).</text>
</comment>
<comment type="catalytic activity">
    <reaction evidence="1">
        <text>an N-(acyl)-sphingosylphosphocholine = an N-(acyl)-sphingosyl-1,3-cyclic phosphate + choline</text>
        <dbReference type="Rhea" id="RHEA:60652"/>
        <dbReference type="ChEBI" id="CHEBI:15354"/>
        <dbReference type="ChEBI" id="CHEBI:64583"/>
        <dbReference type="ChEBI" id="CHEBI:143892"/>
    </reaction>
</comment>
<comment type="catalytic activity">
    <reaction evidence="1">
        <text>an N-(acyl)-sphingosylphosphoethanolamine = an N-(acyl)-sphingosyl-1,3-cyclic phosphate + ethanolamine</text>
        <dbReference type="Rhea" id="RHEA:60648"/>
        <dbReference type="ChEBI" id="CHEBI:57603"/>
        <dbReference type="ChEBI" id="CHEBI:143891"/>
        <dbReference type="ChEBI" id="CHEBI:143892"/>
    </reaction>
</comment>
<comment type="catalytic activity">
    <reaction evidence="1">
        <text>a 1-acyl-sn-glycero-3-phosphocholine = a 1-acyl-sn-glycero-2,3-cyclic phosphate + choline</text>
        <dbReference type="Rhea" id="RHEA:60700"/>
        <dbReference type="ChEBI" id="CHEBI:15354"/>
        <dbReference type="ChEBI" id="CHEBI:58168"/>
        <dbReference type="ChEBI" id="CHEBI:143947"/>
    </reaction>
</comment>
<comment type="catalytic activity">
    <reaction evidence="1">
        <text>a 1-acyl-sn-glycero-3-phosphoethanolamine = a 1-acyl-sn-glycero-2,3-cyclic phosphate + ethanolamine</text>
        <dbReference type="Rhea" id="RHEA:60704"/>
        <dbReference type="ChEBI" id="CHEBI:57603"/>
        <dbReference type="ChEBI" id="CHEBI:64381"/>
        <dbReference type="ChEBI" id="CHEBI:143947"/>
    </reaction>
</comment>
<comment type="cofactor">
    <cofactor evidence="5">
        <name>Mg(2+)</name>
        <dbReference type="ChEBI" id="CHEBI:18420"/>
    </cofactor>
    <text evidence="5">Binds 1 Mg(2+) ion per subunit.</text>
</comment>
<comment type="subcellular location">
    <subcellularLocation>
        <location evidence="8">Secreted</location>
    </subcellularLocation>
</comment>
<comment type="tissue specificity">
    <text evidence="8">Expressed by the venom gland.</text>
</comment>
<comment type="similarity">
    <text evidence="7">Belongs to the arthropod phospholipase D family. Class II subfamily.</text>
</comment>
<comment type="caution">
    <text evidence="1 2 4">The most common activity assay for dermonecrotic toxins detects enzymatic activity by monitoring choline release from substrate. Liberation of choline from sphingomyelin (SM) or lysophosphatidylcholine (LPC) is commonly assumed to result from substrate hydrolysis, giving either ceramide-1-phosphate (C1P) or lysophosphatidic acid (LPA), respectively, as a second product. However, two studies from Lajoie and colleagues (2013 and 2015) report the observation of exclusive formation of cyclic phosphate products as second products, resulting from intramolecular transphosphatidylation. Cyclic phosphates have vastly different biological properties from their monoester counterparts, and they may be relevant to the pathology of brown spider envenomation.</text>
</comment>
<sequence>WIMGHMVNSIAQIDEFVNLGANSIETDVSFDKQANPEYMYHGTPCDCGRDCLHWENFNDFLKGLRKATTPGDSKYHEKLILVVFDLKTGSLYDNQAYDAGTKLAKNLLEHYWNNGNNGGRAYIVLSIPNLNHYKLIAGFKDTLKNEGHEDLLEKVGHDFSGNDDIPDVEKAYKNAGVTGHVWQSDGITNCLPRGLSRVKLAIANRDSGSGIINKVYYWTVDKRSTTRNSLDAGVDGIMTNYPGVIADVLSESAYKNKYKIATYEDNPWETFKP</sequence>
<evidence type="ECO:0000250" key="1">
    <source>
        <dbReference type="UniProtKB" id="A0A0D4WTV1"/>
    </source>
</evidence>
<evidence type="ECO:0000250" key="2">
    <source>
        <dbReference type="UniProtKB" id="A0A0D4WV12"/>
    </source>
</evidence>
<evidence type="ECO:0000250" key="3">
    <source>
        <dbReference type="UniProtKB" id="P0CE80"/>
    </source>
</evidence>
<evidence type="ECO:0000250" key="4">
    <source>
        <dbReference type="UniProtKB" id="Q4ZFU2"/>
    </source>
</evidence>
<evidence type="ECO:0000250" key="5">
    <source>
        <dbReference type="UniProtKB" id="Q8I914"/>
    </source>
</evidence>
<evidence type="ECO:0000303" key="6">
    <source>
    </source>
</evidence>
<evidence type="ECO:0000305" key="7"/>
<evidence type="ECO:0000305" key="8">
    <source>
    </source>
</evidence>
<organism>
    <name type="scientific">Loxosceles rufescens</name>
    <name type="common">Mediterranean recluse spider</name>
    <name type="synonym">Scytodes rufescens</name>
    <dbReference type="NCBI Taxonomy" id="571528"/>
    <lineage>
        <taxon>Eukaryota</taxon>
        <taxon>Metazoa</taxon>
        <taxon>Ecdysozoa</taxon>
        <taxon>Arthropoda</taxon>
        <taxon>Chelicerata</taxon>
        <taxon>Arachnida</taxon>
        <taxon>Araneae</taxon>
        <taxon>Araneomorphae</taxon>
        <taxon>Haplogynae</taxon>
        <taxon>Scytodoidea</taxon>
        <taxon>Sicariidae</taxon>
        <taxon>Loxosceles</taxon>
    </lineage>
</organism>
<proteinExistence type="evidence at transcript level"/>
<feature type="chain" id="PRO_0000392815" description="Dermonecrotic toxin LruSicTox-alphaIC1b">
    <location>
        <begin position="1" status="less than"/>
        <end position="273"/>
    </location>
</feature>
<feature type="active site" evidence="5">
    <location>
        <position position="5"/>
    </location>
</feature>
<feature type="active site" description="Nucleophile" evidence="5">
    <location>
        <position position="41"/>
    </location>
</feature>
<feature type="binding site" evidence="5">
    <location>
        <position position="25"/>
    </location>
    <ligand>
        <name>Mg(2+)</name>
        <dbReference type="ChEBI" id="CHEBI:18420"/>
    </ligand>
</feature>
<feature type="binding site" evidence="5">
    <location>
        <position position="27"/>
    </location>
    <ligand>
        <name>Mg(2+)</name>
        <dbReference type="ChEBI" id="CHEBI:18420"/>
    </ligand>
</feature>
<feature type="binding site" evidence="5">
    <location>
        <position position="85"/>
    </location>
    <ligand>
        <name>Mg(2+)</name>
        <dbReference type="ChEBI" id="CHEBI:18420"/>
    </ligand>
</feature>
<feature type="disulfide bond" evidence="3">
    <location>
        <begin position="45"/>
        <end position="51"/>
    </location>
</feature>
<feature type="disulfide bond" evidence="3">
    <location>
        <begin position="47"/>
        <end position="190"/>
    </location>
</feature>
<feature type="non-terminal residue">
    <location>
        <position position="1"/>
    </location>
</feature>